<accession>Q72YK6</accession>
<sequence length="584" mass="65045">MNNHIEALSYYLGAFVDELTRLNVCDVVISPGSRSTPIALLMEQHEGMNTYLHVDERSAGFFALGIAKAKKRPVALLCTSGTAAANYYPAVCEAFHSRVPLIVLTADRPHELRDVGAPQAMNQINLYGTFVKQFTEMAIPEANEAMYHYARMTTQRMIASALLAPQGPVHLNFPVREPLIPDFSLESLWDKGRGEYTGVVQRGNAVMPSEYVDSLVGRLSHMEKGLIICGDDSHSEIATFATQLAEKTGYPILADPLSNIRSGHHDKTMVIDCYDTFLRNVLLKETWKPEVIIRFGGMPVSKALTQFIKKQTKAVHIVVDESGQWRDPALVATEVVQASDIAFCSALIEKMPVMKKNDWSQMWQHINEKTKETLREMETYDTAFEGRVITDIVRVLPEGATLFASNSMPIRDTDSFFFTSDKNIQVMANRGVNGIDGIISTALGASMICDPLVLVIGDLSFYHDLNGLLAAKLHELNITIVVVNNDGGGIFSFLPQYEKKEHFESLFGTPIGLDYEHVVNMYGGSFSRVNGWEQFREEVQKGTTTEGLHVVEICTNRDENLTLHRTLWAKTQDVITTSLQGESK</sequence>
<gene>
    <name evidence="1" type="primary">menD</name>
    <name type="ordered locus">BCE_5015</name>
</gene>
<feature type="chain" id="PRO_0000341705" description="2-succinyl-5-enolpyruvyl-6-hydroxy-3-cyclohexene-1-carboxylate synthase">
    <location>
        <begin position="1"/>
        <end position="584"/>
    </location>
</feature>
<organism>
    <name type="scientific">Bacillus cereus (strain ATCC 10987 / NRS 248)</name>
    <dbReference type="NCBI Taxonomy" id="222523"/>
    <lineage>
        <taxon>Bacteria</taxon>
        <taxon>Bacillati</taxon>
        <taxon>Bacillota</taxon>
        <taxon>Bacilli</taxon>
        <taxon>Bacillales</taxon>
        <taxon>Bacillaceae</taxon>
        <taxon>Bacillus</taxon>
        <taxon>Bacillus cereus group</taxon>
    </lineage>
</organism>
<name>MEND_BACC1</name>
<keyword id="KW-0460">Magnesium</keyword>
<keyword id="KW-0464">Manganese</keyword>
<keyword id="KW-0474">Menaquinone biosynthesis</keyword>
<keyword id="KW-0479">Metal-binding</keyword>
<keyword id="KW-0786">Thiamine pyrophosphate</keyword>
<keyword id="KW-0808">Transferase</keyword>
<proteinExistence type="inferred from homology"/>
<protein>
    <recommendedName>
        <fullName evidence="1">2-succinyl-5-enolpyruvyl-6-hydroxy-3-cyclohexene-1-carboxylate synthase</fullName>
        <shortName evidence="1">SEPHCHC synthase</shortName>
        <ecNumber evidence="1">2.2.1.9</ecNumber>
    </recommendedName>
    <alternativeName>
        <fullName evidence="1">Menaquinone biosynthesis protein MenD</fullName>
    </alternativeName>
</protein>
<comment type="function">
    <text evidence="1">Catalyzes the thiamine diphosphate-dependent decarboxylation of 2-oxoglutarate and the subsequent addition of the resulting succinic semialdehyde-thiamine pyrophosphate anion to isochorismate to yield 2-succinyl-5-enolpyruvyl-6-hydroxy-3-cyclohexene-1-carboxylate (SEPHCHC).</text>
</comment>
<comment type="catalytic activity">
    <reaction evidence="1">
        <text>isochorismate + 2-oxoglutarate + H(+) = 5-enolpyruvoyl-6-hydroxy-2-succinyl-cyclohex-3-ene-1-carboxylate + CO2</text>
        <dbReference type="Rhea" id="RHEA:25593"/>
        <dbReference type="ChEBI" id="CHEBI:15378"/>
        <dbReference type="ChEBI" id="CHEBI:16526"/>
        <dbReference type="ChEBI" id="CHEBI:16810"/>
        <dbReference type="ChEBI" id="CHEBI:29780"/>
        <dbReference type="ChEBI" id="CHEBI:58818"/>
        <dbReference type="EC" id="2.2.1.9"/>
    </reaction>
</comment>
<comment type="cofactor">
    <cofactor evidence="1">
        <name>Mg(2+)</name>
        <dbReference type="ChEBI" id="CHEBI:18420"/>
    </cofactor>
    <cofactor evidence="1">
        <name>Mn(2+)</name>
        <dbReference type="ChEBI" id="CHEBI:29035"/>
    </cofactor>
</comment>
<comment type="cofactor">
    <cofactor evidence="1">
        <name>thiamine diphosphate</name>
        <dbReference type="ChEBI" id="CHEBI:58937"/>
    </cofactor>
    <text evidence="1">Binds 1 thiamine pyrophosphate per subunit.</text>
</comment>
<comment type="pathway">
    <text evidence="1">Quinol/quinone metabolism; 1,4-dihydroxy-2-naphthoate biosynthesis; 1,4-dihydroxy-2-naphthoate from chorismate: step 2/7.</text>
</comment>
<comment type="pathway">
    <text evidence="1">Quinol/quinone metabolism; menaquinone biosynthesis.</text>
</comment>
<comment type="subunit">
    <text evidence="1">Homodimer.</text>
</comment>
<comment type="similarity">
    <text evidence="1">Belongs to the TPP enzyme family. MenD subfamily.</text>
</comment>
<evidence type="ECO:0000255" key="1">
    <source>
        <dbReference type="HAMAP-Rule" id="MF_01659"/>
    </source>
</evidence>
<reference key="1">
    <citation type="journal article" date="2004" name="Nucleic Acids Res.">
        <title>The genome sequence of Bacillus cereus ATCC 10987 reveals metabolic adaptations and a large plasmid related to Bacillus anthracis pXO1.</title>
        <authorList>
            <person name="Rasko D.A."/>
            <person name="Ravel J."/>
            <person name="Oekstad O.A."/>
            <person name="Helgason E."/>
            <person name="Cer R.Z."/>
            <person name="Jiang L."/>
            <person name="Shores K.A."/>
            <person name="Fouts D.E."/>
            <person name="Tourasse N.J."/>
            <person name="Angiuoli S.V."/>
            <person name="Kolonay J.F."/>
            <person name="Nelson W.C."/>
            <person name="Kolstoe A.-B."/>
            <person name="Fraser C.M."/>
            <person name="Read T.D."/>
        </authorList>
    </citation>
    <scope>NUCLEOTIDE SEQUENCE [LARGE SCALE GENOMIC DNA]</scope>
    <source>
        <strain>ATCC 10987 / NRS 248</strain>
    </source>
</reference>
<dbReference type="EC" id="2.2.1.9" evidence="1"/>
<dbReference type="EMBL" id="AE017194">
    <property type="protein sequence ID" value="AAS43916.1"/>
    <property type="molecule type" value="Genomic_DNA"/>
</dbReference>
<dbReference type="SMR" id="Q72YK6"/>
<dbReference type="KEGG" id="bca:BCE_5015"/>
<dbReference type="HOGENOM" id="CLU_006051_3_0_9"/>
<dbReference type="UniPathway" id="UPA00079"/>
<dbReference type="UniPathway" id="UPA01057">
    <property type="reaction ID" value="UER00164"/>
</dbReference>
<dbReference type="Proteomes" id="UP000002527">
    <property type="component" value="Chromosome"/>
</dbReference>
<dbReference type="GO" id="GO:0070204">
    <property type="term" value="F:2-succinyl-5-enolpyruvyl-6-hydroxy-3-cyclohexene-1-carboxylic-acid synthase activity"/>
    <property type="evidence" value="ECO:0007669"/>
    <property type="project" value="UniProtKB-UniRule"/>
</dbReference>
<dbReference type="GO" id="GO:0000287">
    <property type="term" value="F:magnesium ion binding"/>
    <property type="evidence" value="ECO:0007669"/>
    <property type="project" value="UniProtKB-UniRule"/>
</dbReference>
<dbReference type="GO" id="GO:0030145">
    <property type="term" value="F:manganese ion binding"/>
    <property type="evidence" value="ECO:0007669"/>
    <property type="project" value="UniProtKB-UniRule"/>
</dbReference>
<dbReference type="GO" id="GO:0030976">
    <property type="term" value="F:thiamine pyrophosphate binding"/>
    <property type="evidence" value="ECO:0007669"/>
    <property type="project" value="UniProtKB-UniRule"/>
</dbReference>
<dbReference type="GO" id="GO:0009234">
    <property type="term" value="P:menaquinone biosynthetic process"/>
    <property type="evidence" value="ECO:0007669"/>
    <property type="project" value="UniProtKB-UniRule"/>
</dbReference>
<dbReference type="CDD" id="cd07037">
    <property type="entry name" value="TPP_PYR_MenD"/>
    <property type="match status" value="1"/>
</dbReference>
<dbReference type="CDD" id="cd02009">
    <property type="entry name" value="TPP_SHCHC_synthase"/>
    <property type="match status" value="1"/>
</dbReference>
<dbReference type="Gene3D" id="3.40.50.970">
    <property type="match status" value="2"/>
</dbReference>
<dbReference type="Gene3D" id="3.40.50.1220">
    <property type="entry name" value="TPP-binding domain"/>
    <property type="match status" value="1"/>
</dbReference>
<dbReference type="HAMAP" id="MF_01659">
    <property type="entry name" value="MenD"/>
    <property type="match status" value="1"/>
</dbReference>
<dbReference type="InterPro" id="IPR029035">
    <property type="entry name" value="DHS-like_NAD/FAD-binding_dom"/>
</dbReference>
<dbReference type="InterPro" id="IPR004433">
    <property type="entry name" value="MenaQ_synth_MenD"/>
</dbReference>
<dbReference type="InterPro" id="IPR032264">
    <property type="entry name" value="MenD_middle"/>
</dbReference>
<dbReference type="InterPro" id="IPR029061">
    <property type="entry name" value="THDP-binding"/>
</dbReference>
<dbReference type="InterPro" id="IPR012001">
    <property type="entry name" value="Thiamin_PyroP_enz_TPP-bd_dom"/>
</dbReference>
<dbReference type="InterPro" id="IPR011766">
    <property type="entry name" value="TPP_enzyme_TPP-bd"/>
</dbReference>
<dbReference type="NCBIfam" id="TIGR00173">
    <property type="entry name" value="menD"/>
    <property type="match status" value="1"/>
</dbReference>
<dbReference type="PANTHER" id="PTHR42916">
    <property type="entry name" value="2-SUCCINYL-5-ENOLPYRUVYL-6-HYDROXY-3-CYCLOHEXENE-1-CARBOXYLATE SYNTHASE"/>
    <property type="match status" value="1"/>
</dbReference>
<dbReference type="PANTHER" id="PTHR42916:SF1">
    <property type="entry name" value="PROTEIN PHYLLO, CHLOROPLASTIC"/>
    <property type="match status" value="1"/>
</dbReference>
<dbReference type="Pfam" id="PF02775">
    <property type="entry name" value="TPP_enzyme_C"/>
    <property type="match status" value="1"/>
</dbReference>
<dbReference type="Pfam" id="PF16582">
    <property type="entry name" value="TPP_enzyme_M_2"/>
    <property type="match status" value="1"/>
</dbReference>
<dbReference type="Pfam" id="PF02776">
    <property type="entry name" value="TPP_enzyme_N"/>
    <property type="match status" value="1"/>
</dbReference>
<dbReference type="PIRSF" id="PIRSF004983">
    <property type="entry name" value="MenD"/>
    <property type="match status" value="1"/>
</dbReference>
<dbReference type="SUPFAM" id="SSF52467">
    <property type="entry name" value="DHS-like NAD/FAD-binding domain"/>
    <property type="match status" value="1"/>
</dbReference>
<dbReference type="SUPFAM" id="SSF52518">
    <property type="entry name" value="Thiamin diphosphate-binding fold (THDP-binding)"/>
    <property type="match status" value="2"/>
</dbReference>